<keyword id="KW-0002">3D-structure</keyword>
<keyword id="KW-0032">Aminotransferase</keyword>
<keyword id="KW-0961">Cell wall biogenesis/degradation</keyword>
<keyword id="KW-0448">Lipopolysaccharide biosynthesis</keyword>
<keyword id="KW-0663">Pyridoxal phosphate</keyword>
<keyword id="KW-1185">Reference proteome</keyword>
<keyword id="KW-0808">Transferase</keyword>
<proteinExistence type="evidence at protein level"/>
<feature type="chain" id="PRO_0000419620" description="UDP-2-acetamido-2-deoxy-3-oxo-D-glucuronate aminotransferase">
    <location>
        <begin position="1"/>
        <end position="359"/>
    </location>
</feature>
<feature type="binding site" evidence="16">
    <location>
        <position position="29"/>
    </location>
    <ligand>
        <name>UDP-2-acetamido-2-deoxy-alpha-D-ribo-hex-3-uluronate</name>
        <dbReference type="ChEBI" id="CHEBI:62250"/>
    </ligand>
</feature>
<feature type="binding site" evidence="16">
    <location>
        <position position="31"/>
    </location>
    <ligand>
        <name>UDP-2-acetamido-2-deoxy-alpha-D-ribo-hex-3-uluronate</name>
        <dbReference type="ChEBI" id="CHEBI:62250"/>
    </ligand>
</feature>
<feature type="binding site" evidence="16">
    <location>
        <position position="184"/>
    </location>
    <ligand>
        <name>UDP-2-acetamido-2-deoxy-alpha-D-ribo-hex-3-uluronate</name>
        <dbReference type="ChEBI" id="CHEBI:62250"/>
    </ligand>
</feature>
<feature type="binding site" evidence="16">
    <location>
        <position position="229"/>
    </location>
    <ligand>
        <name>UDP-2-acetamido-2-deoxy-alpha-D-ribo-hex-3-uluronate</name>
        <dbReference type="ChEBI" id="CHEBI:62250"/>
    </ligand>
</feature>
<feature type="binding site" evidence="16">
    <location>
        <position position="308"/>
    </location>
    <ligand>
        <name>UDP-2-acetamido-2-deoxy-alpha-D-ribo-hex-3-uluronate</name>
        <dbReference type="ChEBI" id="CHEBI:62250"/>
    </ligand>
</feature>
<feature type="binding site" evidence="16">
    <location>
        <position position="309"/>
    </location>
    <ligand>
        <name>UDP-2-acetamido-2-deoxy-alpha-D-ribo-hex-3-uluronate</name>
        <dbReference type="ChEBI" id="CHEBI:62250"/>
    </ligand>
</feature>
<feature type="modified residue" description="N6-(pyridoxal phosphate)lysine" evidence="4">
    <location>
        <position position="185"/>
    </location>
</feature>
<feature type="mutagenesis site" description="Minimal loss of activity." evidence="4">
    <original>T</original>
    <variation>A</variation>
    <location>
        <position position="60"/>
    </location>
</feature>
<feature type="mutagenesis site" description="Minimal loss of activity." evidence="4">
    <original>D</original>
    <variation>A</variation>
    <location>
        <position position="156"/>
    </location>
</feature>
<feature type="mutagenesis site" description="Minimal loss of activity." evidence="4">
    <original>Q</original>
    <variation>A</variation>
    <location>
        <position position="159"/>
    </location>
</feature>
<feature type="mutagenesis site" description="Minimal loss of activity." evidence="4">
    <original>S</original>
    <variation>A</variation>
    <location>
        <position position="180"/>
    </location>
</feature>
<feature type="mutagenesis site" description="Abolishes catalytic activity." evidence="4">
    <original>K</original>
    <variation>A</variation>
    <location>
        <position position="185"/>
    </location>
</feature>
<feature type="mutagenesis site" description="Minimal loss of activity." evidence="4">
    <original>N</original>
    <variation>A</variation>
    <location>
        <position position="227"/>
    </location>
</feature>
<feature type="mutagenesis site" description="Minimal loss of activity." evidence="4">
    <original>R</original>
    <variation>A</variation>
    <location>
        <position position="229"/>
    </location>
</feature>
<feature type="mutagenesis site" description="Minimal loss of activity." evidence="4">
    <original>H</original>
    <variation>A</variation>
    <location>
        <position position="308"/>
    </location>
</feature>
<feature type="mutagenesis site" description="Minimal loss of activity." evidence="4">
    <original>Y</original>
    <variation>A</variation>
    <location>
        <position position="309"/>
    </location>
</feature>
<feature type="sequence conflict" description="In Ref. 1; AAC45856." evidence="10" ref="1">
    <original>N</original>
    <variation>D</variation>
    <location>
        <position position="276"/>
    </location>
</feature>
<feature type="helix" evidence="18">
    <location>
        <begin position="8"/>
        <end position="28"/>
    </location>
</feature>
<feature type="helix" evidence="18">
    <location>
        <begin position="35"/>
        <end position="48"/>
    </location>
</feature>
<feature type="strand" evidence="18">
    <location>
        <begin position="51"/>
        <end position="57"/>
    </location>
</feature>
<feature type="helix" evidence="18">
    <location>
        <begin position="59"/>
        <end position="69"/>
    </location>
</feature>
<feature type="strand" evidence="18">
    <location>
        <begin position="77"/>
        <end position="84"/>
    </location>
</feature>
<feature type="helix" evidence="18">
    <location>
        <begin position="87"/>
        <end position="94"/>
    </location>
</feature>
<feature type="strand" evidence="18">
    <location>
        <begin position="98"/>
        <end position="102"/>
    </location>
</feature>
<feature type="turn" evidence="18">
    <location>
        <begin position="106"/>
        <end position="108"/>
    </location>
</feature>
<feature type="helix" evidence="18">
    <location>
        <begin position="113"/>
        <end position="115"/>
    </location>
</feature>
<feature type="helix" evidence="18">
    <location>
        <begin position="117"/>
        <end position="119"/>
    </location>
</feature>
<feature type="strand" evidence="18">
    <location>
        <begin position="124"/>
        <end position="127"/>
    </location>
</feature>
<feature type="helix" evidence="18">
    <location>
        <begin position="132"/>
        <end position="134"/>
    </location>
</feature>
<feature type="helix" evidence="18">
    <location>
        <begin position="139"/>
        <end position="148"/>
    </location>
</feature>
<feature type="strand" evidence="18">
    <location>
        <begin position="153"/>
        <end position="156"/>
    </location>
</feature>
<feature type="turn" evidence="18">
    <location>
        <begin position="158"/>
        <end position="162"/>
    </location>
</feature>
<feature type="strand" evidence="18">
    <location>
        <begin position="172"/>
        <end position="180"/>
    </location>
</feature>
<feature type="strand" evidence="18">
    <location>
        <begin position="185"/>
        <end position="187"/>
    </location>
</feature>
<feature type="strand" evidence="18">
    <location>
        <begin position="194"/>
        <end position="199"/>
    </location>
</feature>
<feature type="helix" evidence="18">
    <location>
        <begin position="201"/>
        <end position="210"/>
    </location>
</feature>
<feature type="strand" evidence="18">
    <location>
        <begin position="215"/>
        <end position="217"/>
    </location>
</feature>
<feature type="helix" evidence="18">
    <location>
        <begin position="232"/>
        <end position="243"/>
    </location>
</feature>
<feature type="helix" evidence="18">
    <location>
        <begin position="245"/>
        <end position="265"/>
    </location>
</feature>
<feature type="strand" evidence="18">
    <location>
        <begin position="282"/>
        <end position="287"/>
    </location>
</feature>
<feature type="helix" evidence="18">
    <location>
        <begin position="291"/>
        <end position="301"/>
    </location>
</feature>
<feature type="helix" evidence="18">
    <location>
        <begin position="313"/>
        <end position="315"/>
    </location>
</feature>
<feature type="helix" evidence="18">
    <location>
        <begin position="317"/>
        <end position="319"/>
    </location>
</feature>
<feature type="strand" evidence="17">
    <location>
        <begin position="322"/>
        <end position="324"/>
    </location>
</feature>
<feature type="helix" evidence="18">
    <location>
        <begin position="327"/>
        <end position="335"/>
    </location>
</feature>
<feature type="strand" evidence="18">
    <location>
        <begin position="336"/>
        <end position="339"/>
    </location>
</feature>
<feature type="helix" evidence="18">
    <location>
        <begin position="347"/>
        <end position="358"/>
    </location>
</feature>
<name>WBPE_PSEAE</name>
<reference evidence="10 11" key="1">
    <citation type="journal article" date="1996" name="Mol. Microbiol.">
        <title>Molecular characterization of the Pseudomonas aeruginosa serotype O5 (PAO1) B-band lipopolysaccharide gene cluster.</title>
        <authorList>
            <person name="Burrows L.L."/>
            <person name="Charter D.F."/>
            <person name="Lam J.S."/>
        </authorList>
    </citation>
    <scope>NUCLEOTIDE SEQUENCE [GENOMIC DNA]</scope>
    <scope>PATHWAY</scope>
    <source>
        <strain evidence="11">ATCC 15692 / DSM 22644 / CIP 104116 / JCM 14847 / LMG 12228 / 1C / PRS 101 / PAO1</strain>
    </source>
</reference>
<reference evidence="12" key="2">
    <citation type="journal article" date="2000" name="Nature">
        <title>Complete genome sequence of Pseudomonas aeruginosa PAO1, an opportunistic pathogen.</title>
        <authorList>
            <person name="Stover C.K."/>
            <person name="Pham X.-Q.T."/>
            <person name="Erwin A.L."/>
            <person name="Mizoguchi S.D."/>
            <person name="Warrener P."/>
            <person name="Hickey M.J."/>
            <person name="Brinkman F.S.L."/>
            <person name="Hufnagle W.O."/>
            <person name="Kowalik D.J."/>
            <person name="Lagrou M."/>
            <person name="Garber R.L."/>
            <person name="Goltry L."/>
            <person name="Tolentino E."/>
            <person name="Westbrock-Wadman S."/>
            <person name="Yuan Y."/>
            <person name="Brody L.L."/>
            <person name="Coulter S.N."/>
            <person name="Folger K.R."/>
            <person name="Kas A."/>
            <person name="Larbig K."/>
            <person name="Lim R.M."/>
            <person name="Smith K.A."/>
            <person name="Spencer D.H."/>
            <person name="Wong G.K.-S."/>
            <person name="Wu Z."/>
            <person name="Paulsen I.T."/>
            <person name="Reizer J."/>
            <person name="Saier M.H. Jr."/>
            <person name="Hancock R.E.W."/>
            <person name="Lory S."/>
            <person name="Olson M.V."/>
        </authorList>
    </citation>
    <scope>NUCLEOTIDE SEQUENCE [LARGE SCALE GENOMIC DNA]</scope>
    <source>
        <strain>ATCC 15692 / DSM 22644 / CIP 104116 / JCM 14847 / LMG 12228 / 1C / PRS 101 / PAO1</strain>
    </source>
</reference>
<reference evidence="10" key="3">
    <citation type="journal article" date="2008" name="J. Bacteriol.">
        <title>Biosynthesis of a rare di-N-acetylated sugar in the lipopolysaccharides of both Pseudomonas aeruginosa and Bordetella pertussis occurs via an identical scheme despite different gene clusters.</title>
        <authorList>
            <person name="Westman E.L."/>
            <person name="Preston A."/>
            <person name="Field R.A."/>
            <person name="Lam J.S."/>
        </authorList>
    </citation>
    <scope>FUNCTION</scope>
    <scope>PATHWAY</scope>
    <source>
        <strain evidence="1">ATCC 15692 / DSM 22644 / CIP 104116 / JCM 14847 / LMG 12228 / 1C / PRS 101 / PAO1</strain>
    </source>
</reference>
<reference evidence="10" key="4">
    <citation type="journal article" date="2009" name="Biochemistry">
        <title>Biosynthesis of UDP-GlcNAc(3NAc)A by WbpB, WbpE, and WbpD: enzymes in the Wbp pathway responsible for O-antigen assembly in Pseudomonas aeruginosa PAO1.</title>
        <authorList>
            <person name="Larkin A."/>
            <person name="Imperiali B."/>
        </authorList>
    </citation>
    <scope>FUNCTION</scope>
    <scope>CATALYTIC ACTIVITY</scope>
    <scope>SUBSTRATE SPECIFICITY</scope>
    <scope>COFACTOR</scope>
    <scope>BIOPHYSICOCHEMICAL PROPERTIES</scope>
    <scope>PATHWAY</scope>
    <source>
        <strain evidence="3">ATCC 15692 / DSM 22644 / CIP 104116 / JCM 14847 / LMG 12228 / 1C / PRS 101 / PAO1</strain>
    </source>
</reference>
<reference evidence="10" key="5">
    <citation type="journal article" date="2009" name="J. Biol. Chem.">
        <title>Characterization of WbpB, WbpE, and WbpD and reconstitution of a pathway for the biosynthesis of UDP-2,3-diacetamido-2,3-dideoxy-D-mannuronic acid in Pseudomonas aeruginosa.</title>
        <authorList>
            <person name="Westman E.L."/>
            <person name="McNally D.J."/>
            <person name="Charchoglyan A."/>
            <person name="Brewer D."/>
            <person name="Field R.A."/>
            <person name="Lam J.S."/>
        </authorList>
    </citation>
    <scope>FUNCTION</scope>
    <scope>CATALYTIC ACTIVITY</scope>
    <scope>PATHWAY</scope>
    <source>
        <strain evidence="2">ATCC 15692 / DSM 22644 / CIP 104116 / JCM 14847 / LMG 12228 / 1C / PRS 101 / PAO1</strain>
    </source>
</reference>
<reference evidence="14 15 16" key="6">
    <citation type="journal article" date="2010" name="Biochemistry">
        <title>Structural analysis of WbpE from Pseudomonas aeruginosa PAO1: a nucleotide sugar aminotransferase involved in O-antigen assembly.</title>
        <authorList>
            <person name="Larkin A."/>
            <person name="Olivier N.B."/>
            <person name="Imperiali B."/>
        </authorList>
    </citation>
    <scope>X-RAY CRYSTALLOGRAPHY (1.50 ANGSTROMS) IN COMPLEXES WITH PYRIDOXAL PHOSPHATE; PYRIDOXAMINE PHOSPHATE AND THE EXTERNAL ALDIMINE OF PLP WITH NUCLEOTIDE SUGAR PRODUCT</scope>
    <scope>COFACTOR</scope>
    <scope>MUTAGENESIS OF THR-60; ASP-156; GLN-159; SER-180; LYS-185; ASN-227; ARG-229; HIS-308 AND TYR-309</scope>
    <scope>SUBUNIT</scope>
    <source>
        <strain evidence="4">ATCC 15692 / DSM 22644 / CIP 104116 / JCM 14847 / LMG 12228 / 1C / PRS 101 / PAO1</strain>
    </source>
</reference>
<reference evidence="13" key="7">
    <citation type="submission" date="2010-07" db="PDB data bank">
        <title>X-ray crystal structure of the Wbpe (WlbE) aminotransferase from Pseudomonas aeruginosa as the PLP internal aldimine adduct with lysine 185.</title>
        <authorList>
            <person name="Holden H.M."/>
            <person name="Thoden J.B."/>
        </authorList>
    </citation>
    <scope>X-RAY CRYSTALLOGRAPHY (1.50 ANGSTROMS) IN COMPLEX WITH PYRIDOXAL PHOSPHATE</scope>
</reference>
<reference evidence="13" key="8">
    <citation type="submission" date="2010-07" db="PDB data bank">
        <title>X-ray crystal structure of the WlbE (WpbE) aminotransferase from Pseudomonas aeruginosa, mutation K185A, in complex with the PLP external aldimine adduct with UDP-3-amino-2-N-acetyl-glucuronic acid, at 1.3 angstrom resolution.</title>
        <authorList>
            <person name="Holden H.M."/>
            <person name="Thoden J.B."/>
        </authorList>
    </citation>
    <scope>X-RAY CRYSTALLOGRAPHY (1.30 ANGSTROMS) OF MUTANT ALA-185 IN COMPLEX WITH THE EXTERNAL ALDIMINE OF PLP WITH NUCLEOTIDE SUGAR PRODUCT</scope>
</reference>
<reference evidence="13" key="9">
    <citation type="submission" date="2010-07" db="PDB data bank">
        <title>X-ray structure of the K185A mutant of WbpE (WlbE) from Pseudomonas aeruginosa in complex with PLP at 1.45 angstrom resolution.</title>
        <authorList>
            <person name="Holden H.M."/>
            <person name="Thoden J.B."/>
        </authorList>
    </citation>
    <scope>X-RAY CRYSTALLOGRAPHY (1.45 ANGSTROMS) OF MUTANT ALA-185 IN COMPLEX WITH PYRIDOXAL PHOSPHATE</scope>
</reference>
<organism>
    <name type="scientific">Pseudomonas aeruginosa (strain ATCC 15692 / DSM 22644 / CIP 104116 / JCM 14847 / LMG 12228 / 1C / PRS 101 / PAO1)</name>
    <dbReference type="NCBI Taxonomy" id="208964"/>
    <lineage>
        <taxon>Bacteria</taxon>
        <taxon>Pseudomonadati</taxon>
        <taxon>Pseudomonadota</taxon>
        <taxon>Gammaproteobacteria</taxon>
        <taxon>Pseudomonadales</taxon>
        <taxon>Pseudomonadaceae</taxon>
        <taxon>Pseudomonas</taxon>
    </lineage>
</organism>
<comment type="function">
    <text evidence="1 2 3">Plays a role in the biosynthesis of B-band O antigen for serotype O5. Catalyzes the amination of UDP-2-acetamido-2-deoxy-3-oxo-D-glucuronic acid (UDP-3-oxo-D-GlcNAcA) to UDP-2-acetamido-3-amino-2,3-dideoxy-D-glucuronic acid (UDP-GlcNAc3NA), using L-glutamate as the preferred amine donor.</text>
</comment>
<comment type="catalytic activity">
    <reaction evidence="2 3">
        <text>UDP-2-acetamido-2-deoxy-alpha-D-ribo-hex-3-uluronate + L-glutamate = UDP-2-acetamido-3-amino-2,3-dideoxy-alpha-D-glucuronate + 2-oxoglutarate</text>
        <dbReference type="Rhea" id="RHEA:33583"/>
        <dbReference type="ChEBI" id="CHEBI:16810"/>
        <dbReference type="ChEBI" id="CHEBI:29985"/>
        <dbReference type="ChEBI" id="CHEBI:62245"/>
        <dbReference type="ChEBI" id="CHEBI:62250"/>
        <dbReference type="EC" id="2.6.1.98"/>
    </reaction>
</comment>
<comment type="cofactor">
    <cofactor evidence="3 4">
        <name>pyridoxal 5'-phosphate</name>
        <dbReference type="ChEBI" id="CHEBI:597326"/>
    </cofactor>
    <text evidence="3 4">Binds 1 pyridoxal phosphate per subunit.</text>
</comment>
<comment type="biophysicochemical properties">
    <phDependence>
        <text evidence="3">Optimum pH is 8.0 for the coupled WbpB/WbpE reaction.</text>
    </phDependence>
    <temperatureDependence>
        <text evidence="3">Optimum temperature is 30 degrees Celsius for the coupled WbpB/WbpE reaction.</text>
    </temperatureDependence>
</comment>
<comment type="pathway">
    <text evidence="1 2 3 5">Bacterial outer membrane biogenesis; LPS O-antigen biosynthesis.</text>
</comment>
<comment type="subunit">
    <text evidence="4 6 7 8">Homodimer.</text>
</comment>
<comment type="similarity">
    <text evidence="10">Belongs to the DegT/DnrJ/EryC1 family.</text>
</comment>
<comment type="sequence caution" evidence="10">
    <conflict type="frameshift">
        <sequence resource="EMBL-CDS" id="AAC45856"/>
    </conflict>
</comment>
<dbReference type="EC" id="2.6.1.98"/>
<dbReference type="EMBL" id="U50396">
    <property type="protein sequence ID" value="AAC45856.1"/>
    <property type="status" value="ALT_FRAME"/>
    <property type="molecule type" value="Genomic_DNA"/>
</dbReference>
<dbReference type="EMBL" id="AE004091">
    <property type="protein sequence ID" value="AAG06543.1"/>
    <property type="molecule type" value="Genomic_DNA"/>
</dbReference>
<dbReference type="PIR" id="E83251">
    <property type="entry name" value="E83251"/>
</dbReference>
<dbReference type="RefSeq" id="NP_251845.1">
    <property type="nucleotide sequence ID" value="NC_002516.2"/>
</dbReference>
<dbReference type="RefSeq" id="WP_003113425.1">
    <property type="nucleotide sequence ID" value="NC_002516.2"/>
</dbReference>
<dbReference type="PDB" id="3NU7">
    <property type="method" value="X-ray"/>
    <property type="resolution" value="1.95 A"/>
    <property type="chains" value="A/B=1-359"/>
</dbReference>
<dbReference type="PDB" id="3NU8">
    <property type="method" value="X-ray"/>
    <property type="resolution" value="1.50 A"/>
    <property type="chains" value="A/B=1-359"/>
</dbReference>
<dbReference type="PDB" id="3NUB">
    <property type="method" value="X-ray"/>
    <property type="resolution" value="1.90 A"/>
    <property type="chains" value="A/B=1-359"/>
</dbReference>
<dbReference type="PDB" id="3NYS">
    <property type="method" value="X-ray"/>
    <property type="resolution" value="1.45 A"/>
    <property type="chains" value="A=1-359"/>
</dbReference>
<dbReference type="PDB" id="3NYT">
    <property type="method" value="X-ray"/>
    <property type="resolution" value="1.30 A"/>
    <property type="chains" value="A=1-359"/>
</dbReference>
<dbReference type="PDB" id="3NYU">
    <property type="method" value="X-ray"/>
    <property type="resolution" value="1.50 A"/>
    <property type="chains" value="A/B/C/D=1-359"/>
</dbReference>
<dbReference type="PDBsum" id="3NU7"/>
<dbReference type="PDBsum" id="3NU8"/>
<dbReference type="PDBsum" id="3NUB"/>
<dbReference type="PDBsum" id="3NYS"/>
<dbReference type="PDBsum" id="3NYT"/>
<dbReference type="PDBsum" id="3NYU"/>
<dbReference type="SMR" id="Q9HZ76"/>
<dbReference type="STRING" id="208964.PA3155"/>
<dbReference type="PaxDb" id="208964-PA3155"/>
<dbReference type="DNASU" id="882653"/>
<dbReference type="GeneID" id="882653"/>
<dbReference type="KEGG" id="pae:PA3155"/>
<dbReference type="PATRIC" id="fig|208964.12.peg.3299"/>
<dbReference type="PseudoCAP" id="PA3155"/>
<dbReference type="HOGENOM" id="CLU_033332_6_1_6"/>
<dbReference type="InParanoid" id="Q9HZ76"/>
<dbReference type="OrthoDB" id="9804264at2"/>
<dbReference type="PhylomeDB" id="Q9HZ76"/>
<dbReference type="BioCyc" id="MetaCyc:MONOMER-17574"/>
<dbReference type="BioCyc" id="PAER208964:G1FZ6-3215-MONOMER"/>
<dbReference type="BRENDA" id="2.6.1.98">
    <property type="organism ID" value="5087"/>
</dbReference>
<dbReference type="UniPathway" id="UPA00281"/>
<dbReference type="EvolutionaryTrace" id="Q9HZ76"/>
<dbReference type="Proteomes" id="UP000002438">
    <property type="component" value="Chromosome"/>
</dbReference>
<dbReference type="GO" id="GO:0030170">
    <property type="term" value="F:pyridoxal phosphate binding"/>
    <property type="evidence" value="ECO:0000314"/>
    <property type="project" value="UniProtKB"/>
</dbReference>
<dbReference type="GO" id="GO:0008483">
    <property type="term" value="F:transaminase activity"/>
    <property type="evidence" value="ECO:0000314"/>
    <property type="project" value="UniProtKB"/>
</dbReference>
<dbReference type="GO" id="GO:0071555">
    <property type="term" value="P:cell wall organization"/>
    <property type="evidence" value="ECO:0007669"/>
    <property type="project" value="UniProtKB-KW"/>
</dbReference>
<dbReference type="GO" id="GO:0009103">
    <property type="term" value="P:lipopolysaccharide biosynthetic process"/>
    <property type="evidence" value="ECO:0000314"/>
    <property type="project" value="UniProtKB"/>
</dbReference>
<dbReference type="GO" id="GO:0009243">
    <property type="term" value="P:O antigen biosynthetic process"/>
    <property type="evidence" value="ECO:0000314"/>
    <property type="project" value="UniProtKB"/>
</dbReference>
<dbReference type="GO" id="GO:0000271">
    <property type="term" value="P:polysaccharide biosynthetic process"/>
    <property type="evidence" value="ECO:0000314"/>
    <property type="project" value="PseudoCAP"/>
</dbReference>
<dbReference type="GO" id="GO:0006065">
    <property type="term" value="P:UDP-glucuronate biosynthetic process"/>
    <property type="evidence" value="ECO:0000269"/>
    <property type="project" value="PseudoCAP"/>
</dbReference>
<dbReference type="CDD" id="cd00616">
    <property type="entry name" value="AHBA_syn"/>
    <property type="match status" value="1"/>
</dbReference>
<dbReference type="FunFam" id="3.40.640.10:FF:000089">
    <property type="entry name" value="Aminotransferase, DegT/DnrJ/EryC1/StrS family"/>
    <property type="match status" value="1"/>
</dbReference>
<dbReference type="Gene3D" id="3.90.1150.10">
    <property type="entry name" value="Aspartate Aminotransferase, domain 1"/>
    <property type="match status" value="1"/>
</dbReference>
<dbReference type="Gene3D" id="3.40.640.10">
    <property type="entry name" value="Type I PLP-dependent aspartate aminotransferase-like (Major domain)"/>
    <property type="match status" value="1"/>
</dbReference>
<dbReference type="InterPro" id="IPR000653">
    <property type="entry name" value="DegT/StrS_aminotransferase"/>
</dbReference>
<dbReference type="InterPro" id="IPR015424">
    <property type="entry name" value="PyrdxlP-dep_Trfase"/>
</dbReference>
<dbReference type="InterPro" id="IPR015421">
    <property type="entry name" value="PyrdxlP-dep_Trfase_major"/>
</dbReference>
<dbReference type="InterPro" id="IPR015422">
    <property type="entry name" value="PyrdxlP-dep_Trfase_small"/>
</dbReference>
<dbReference type="PANTHER" id="PTHR30244">
    <property type="entry name" value="TRANSAMINASE"/>
    <property type="match status" value="1"/>
</dbReference>
<dbReference type="PANTHER" id="PTHR30244:SF42">
    <property type="entry name" value="UDP-2-ACETAMIDO-2-DEOXY-3-OXO-D-GLUCURONATE AMINOTRANSFERASE"/>
    <property type="match status" value="1"/>
</dbReference>
<dbReference type="Pfam" id="PF01041">
    <property type="entry name" value="DegT_DnrJ_EryC1"/>
    <property type="match status" value="1"/>
</dbReference>
<dbReference type="PIRSF" id="PIRSF000390">
    <property type="entry name" value="PLP_StrS"/>
    <property type="match status" value="1"/>
</dbReference>
<dbReference type="SUPFAM" id="SSF53383">
    <property type="entry name" value="PLP-dependent transferases"/>
    <property type="match status" value="1"/>
</dbReference>
<sequence>MIEFIDLKNQQARIKDKIDAGIQRVLRHGQYILGPEVTELEDRLADFVGAKYCISCANGTDALQIVQMALGVGPGDEVITPGFTYVATAETVALLGAKPVYVDIDPRTYNLDPQLLEAAITPRTKAIIPVSLYGQCADFDAINAIASKYGIPVIEDAAQSFGASYKGKRSCNLSTVACTSFFPSKPLGCYGDGGAIFTNDDELATAIRQIARHGQDRRYHHIRVGVNSRLDTLQAAILLPKLEIFEEEIALRQKVAAEYDLSLKQVGIGTPFIEVNNISVYAQYTVRMDNRESVQASLKAAGVPTAVHYPIPLNKQPAVADEKAKLPVGDKAATQVMSLPMHPYLDTASIKIICAALTN</sequence>
<gene>
    <name evidence="12" type="primary">wbpE</name>
    <name type="ordered locus">PA3155</name>
</gene>
<protein>
    <recommendedName>
        <fullName>UDP-2-acetamido-2-deoxy-3-oxo-D-glucuronate aminotransferase</fullName>
        <shortName>UDP-3-oxo-D-GlcNAcA aminotransferase</shortName>
        <ecNumber>2.6.1.98</ecNumber>
    </recommendedName>
    <alternativeName>
        <fullName>UDP-2-acetamido-2-deoxy-alpha-D-ribo-hex-3-uluronic acid transaminase</fullName>
    </alternativeName>
    <alternativeName>
        <fullName evidence="9">UDP-2-acetamido-2-deoxy-ribo-hexuluronate aminotransferase</fullName>
    </alternativeName>
</protein>
<evidence type="ECO:0000269" key="1">
    <source>
    </source>
</evidence>
<evidence type="ECO:0000269" key="2">
    <source>
    </source>
</evidence>
<evidence type="ECO:0000269" key="3">
    <source>
    </source>
</evidence>
<evidence type="ECO:0000269" key="4">
    <source>
    </source>
</evidence>
<evidence type="ECO:0000269" key="5">
    <source>
    </source>
</evidence>
<evidence type="ECO:0000269" key="6">
    <source ref="7"/>
</evidence>
<evidence type="ECO:0000269" key="7">
    <source ref="8"/>
</evidence>
<evidence type="ECO:0000269" key="8">
    <source ref="9"/>
</evidence>
<evidence type="ECO:0000303" key="9">
    <source>
    </source>
</evidence>
<evidence type="ECO:0000305" key="10"/>
<evidence type="ECO:0000312" key="11">
    <source>
        <dbReference type="EMBL" id="AAC45856.1"/>
    </source>
</evidence>
<evidence type="ECO:0000312" key="12">
    <source>
        <dbReference type="EMBL" id="AAG06543.1"/>
    </source>
</evidence>
<evidence type="ECO:0000312" key="13">
    <source>
        <dbReference type="PDB" id="3NYU"/>
    </source>
</evidence>
<evidence type="ECO:0007744" key="14">
    <source>
        <dbReference type="PDB" id="3NU7"/>
    </source>
</evidence>
<evidence type="ECO:0007744" key="15">
    <source>
        <dbReference type="PDB" id="3NU8"/>
    </source>
</evidence>
<evidence type="ECO:0007744" key="16">
    <source>
        <dbReference type="PDB" id="3NUB"/>
    </source>
</evidence>
<evidence type="ECO:0007829" key="17">
    <source>
        <dbReference type="PDB" id="3NYS"/>
    </source>
</evidence>
<evidence type="ECO:0007829" key="18">
    <source>
        <dbReference type="PDB" id="3NYT"/>
    </source>
</evidence>
<accession>Q9HZ76</accession>
<accession>P72136</accession>